<protein>
    <recommendedName>
        <fullName evidence="1">Na(+)-translocating NADH-quinone reductase subunit D</fullName>
        <shortName evidence="1">Na(+)-NQR subunit D</shortName>
        <shortName evidence="1">Na(+)-translocating NQR subunit D</shortName>
        <ecNumber evidence="1">7.2.1.1</ecNumber>
    </recommendedName>
    <alternativeName>
        <fullName evidence="1">NQR complex subunit D</fullName>
    </alternativeName>
    <alternativeName>
        <fullName evidence="1">NQR-1 subunit D</fullName>
    </alternativeName>
</protein>
<proteinExistence type="inferred from homology"/>
<comment type="function">
    <text evidence="1">NQR complex catalyzes the reduction of ubiquinone-1 to ubiquinol by two successive reactions, coupled with the transport of Na(+) ions from the cytoplasm to the periplasm. NqrA to NqrE are probably involved in the second step, the conversion of ubisemiquinone to ubiquinol.</text>
</comment>
<comment type="catalytic activity">
    <reaction evidence="1">
        <text>a ubiquinone + n Na(+)(in) + NADH + H(+) = a ubiquinol + n Na(+)(out) + NAD(+)</text>
        <dbReference type="Rhea" id="RHEA:47748"/>
        <dbReference type="Rhea" id="RHEA-COMP:9565"/>
        <dbReference type="Rhea" id="RHEA-COMP:9566"/>
        <dbReference type="ChEBI" id="CHEBI:15378"/>
        <dbReference type="ChEBI" id="CHEBI:16389"/>
        <dbReference type="ChEBI" id="CHEBI:17976"/>
        <dbReference type="ChEBI" id="CHEBI:29101"/>
        <dbReference type="ChEBI" id="CHEBI:57540"/>
        <dbReference type="ChEBI" id="CHEBI:57945"/>
        <dbReference type="EC" id="7.2.1.1"/>
    </reaction>
</comment>
<comment type="subunit">
    <text evidence="1">Composed of six subunits; NqrA, NqrB, NqrC, NqrD, NqrE and NqrF.</text>
</comment>
<comment type="subcellular location">
    <subcellularLocation>
        <location evidence="1">Cell inner membrane</location>
        <topology evidence="1">Multi-pass membrane protein</topology>
    </subcellularLocation>
</comment>
<comment type="similarity">
    <text evidence="1">Belongs to the NqrDE/RnfAE family.</text>
</comment>
<feature type="chain" id="PRO_1000060165" description="Na(+)-translocating NADH-quinone reductase subunit D">
    <location>
        <begin position="1"/>
        <end position="210"/>
    </location>
</feature>
<feature type="transmembrane region" description="Helical" evidence="1">
    <location>
        <begin position="14"/>
        <end position="34"/>
    </location>
</feature>
<feature type="transmembrane region" description="Helical" evidence="1">
    <location>
        <begin position="42"/>
        <end position="62"/>
    </location>
</feature>
<feature type="transmembrane region" description="Helical" evidence="1">
    <location>
        <begin position="72"/>
        <end position="92"/>
    </location>
</feature>
<feature type="transmembrane region" description="Helical" evidence="1">
    <location>
        <begin position="103"/>
        <end position="123"/>
    </location>
</feature>
<feature type="transmembrane region" description="Helical" evidence="1">
    <location>
        <begin position="131"/>
        <end position="151"/>
    </location>
</feature>
<feature type="transmembrane region" description="Helical" evidence="1">
    <location>
        <begin position="178"/>
        <end position="198"/>
    </location>
</feature>
<organism>
    <name type="scientific">Shewanella baltica (strain OS155 / ATCC BAA-1091)</name>
    <dbReference type="NCBI Taxonomy" id="325240"/>
    <lineage>
        <taxon>Bacteria</taxon>
        <taxon>Pseudomonadati</taxon>
        <taxon>Pseudomonadota</taxon>
        <taxon>Gammaproteobacteria</taxon>
        <taxon>Alteromonadales</taxon>
        <taxon>Shewanellaceae</taxon>
        <taxon>Shewanella</taxon>
    </lineage>
</organism>
<dbReference type="EC" id="7.2.1.1" evidence="1"/>
<dbReference type="EMBL" id="CP000563">
    <property type="protein sequence ID" value="ABN60452.1"/>
    <property type="molecule type" value="Genomic_DNA"/>
</dbReference>
<dbReference type="RefSeq" id="WP_006080467.1">
    <property type="nucleotide sequence ID" value="NC_009052.1"/>
</dbReference>
<dbReference type="SMR" id="A3D139"/>
<dbReference type="STRING" id="325240.Sbal_0927"/>
<dbReference type="KEGG" id="sbl:Sbal_0927"/>
<dbReference type="HOGENOM" id="CLU_046659_1_1_6"/>
<dbReference type="OrthoDB" id="9782945at2"/>
<dbReference type="Proteomes" id="UP000001557">
    <property type="component" value="Chromosome"/>
</dbReference>
<dbReference type="GO" id="GO:0005886">
    <property type="term" value="C:plasma membrane"/>
    <property type="evidence" value="ECO:0007669"/>
    <property type="project" value="UniProtKB-SubCell"/>
</dbReference>
<dbReference type="GO" id="GO:0016655">
    <property type="term" value="F:oxidoreductase activity, acting on NAD(P)H, quinone or similar compound as acceptor"/>
    <property type="evidence" value="ECO:0007669"/>
    <property type="project" value="UniProtKB-UniRule"/>
</dbReference>
<dbReference type="GO" id="GO:0006814">
    <property type="term" value="P:sodium ion transport"/>
    <property type="evidence" value="ECO:0007669"/>
    <property type="project" value="UniProtKB-UniRule"/>
</dbReference>
<dbReference type="HAMAP" id="MF_00428">
    <property type="entry name" value="NqrD"/>
    <property type="match status" value="1"/>
</dbReference>
<dbReference type="InterPro" id="IPR011292">
    <property type="entry name" value="NqrD"/>
</dbReference>
<dbReference type="InterPro" id="IPR003667">
    <property type="entry name" value="NqrDE/RnfAE"/>
</dbReference>
<dbReference type="NCBIfam" id="TIGR01939">
    <property type="entry name" value="nqrD"/>
    <property type="match status" value="1"/>
</dbReference>
<dbReference type="NCBIfam" id="NF006777">
    <property type="entry name" value="PRK09292.1"/>
    <property type="match status" value="1"/>
</dbReference>
<dbReference type="NCBIfam" id="NF009070">
    <property type="entry name" value="PRK12405.1"/>
    <property type="match status" value="1"/>
</dbReference>
<dbReference type="PANTHER" id="PTHR30586">
    <property type="entry name" value="ELECTRON TRANSPORT COMPLEX PROTEIN RNFE"/>
    <property type="match status" value="1"/>
</dbReference>
<dbReference type="PANTHER" id="PTHR30586:SF1">
    <property type="entry name" value="NA(+)-TRANSLOCATING NADH-QUINONE REDUCTASE SUBUNIT D"/>
    <property type="match status" value="1"/>
</dbReference>
<dbReference type="Pfam" id="PF02508">
    <property type="entry name" value="Rnf-Nqr"/>
    <property type="match status" value="1"/>
</dbReference>
<dbReference type="PIRSF" id="PIRSF006102">
    <property type="entry name" value="NQR_DE"/>
    <property type="match status" value="1"/>
</dbReference>
<reference key="1">
    <citation type="submission" date="2007-02" db="EMBL/GenBank/DDBJ databases">
        <title>Complete sequence of chromosome of Shewanella baltica OS155.</title>
        <authorList>
            <consortium name="US DOE Joint Genome Institute"/>
            <person name="Copeland A."/>
            <person name="Lucas S."/>
            <person name="Lapidus A."/>
            <person name="Barry K."/>
            <person name="Detter J.C."/>
            <person name="Glavina del Rio T."/>
            <person name="Hammon N."/>
            <person name="Israni S."/>
            <person name="Dalin E."/>
            <person name="Tice H."/>
            <person name="Pitluck S."/>
            <person name="Sims D.R."/>
            <person name="Brettin T."/>
            <person name="Bruce D."/>
            <person name="Han C."/>
            <person name="Tapia R."/>
            <person name="Brainard J."/>
            <person name="Schmutz J."/>
            <person name="Larimer F."/>
            <person name="Land M."/>
            <person name="Hauser L."/>
            <person name="Kyrpides N."/>
            <person name="Mikhailova N."/>
            <person name="Brettar I."/>
            <person name="Klappenbach J."/>
            <person name="Konstantinidis K."/>
            <person name="Rodrigues J."/>
            <person name="Tiedje J."/>
            <person name="Richardson P."/>
        </authorList>
    </citation>
    <scope>NUCLEOTIDE SEQUENCE [LARGE SCALE GENOMIC DNA]</scope>
    <source>
        <strain>OS155 / ATCC BAA-1091</strain>
    </source>
</reference>
<accession>A3D139</accession>
<gene>
    <name evidence="1" type="primary">nqrD</name>
    <name type="ordered locus">Sbal_0927</name>
</gene>
<sequence>MSDAKELKQVLTGPIVNNNPIALQVLGVCSALAVTSKLETALVMALALTAVTAFSNLFISMIRNHIPSSVRIIVQMTIIASLVIVVDQLLQAYAYQISKQLSVFVGLIITNCIVMGRAEAYAMKTPPMMSFMDGIGNGLGYGAILLAVGFVRELFGNGSLFGVEILHKISDGGWYQPNGLLLLPPSAFFLIGVLIWIIRTYKPEQVEAKG</sequence>
<evidence type="ECO:0000255" key="1">
    <source>
        <dbReference type="HAMAP-Rule" id="MF_00428"/>
    </source>
</evidence>
<keyword id="KW-0997">Cell inner membrane</keyword>
<keyword id="KW-1003">Cell membrane</keyword>
<keyword id="KW-0406">Ion transport</keyword>
<keyword id="KW-0472">Membrane</keyword>
<keyword id="KW-0520">NAD</keyword>
<keyword id="KW-1185">Reference proteome</keyword>
<keyword id="KW-0915">Sodium</keyword>
<keyword id="KW-0739">Sodium transport</keyword>
<keyword id="KW-1278">Translocase</keyword>
<keyword id="KW-0812">Transmembrane</keyword>
<keyword id="KW-1133">Transmembrane helix</keyword>
<keyword id="KW-0813">Transport</keyword>
<keyword id="KW-0830">Ubiquinone</keyword>
<name>NQRD_SHEB5</name>